<dbReference type="EMBL" id="CP000851">
    <property type="protein sequence ID" value="ABV85363.1"/>
    <property type="molecule type" value="Genomic_DNA"/>
</dbReference>
<dbReference type="RefSeq" id="WP_012153309.1">
    <property type="nucleotide sequence ID" value="NC_009901.1"/>
</dbReference>
<dbReference type="SMR" id="A8GYH6"/>
<dbReference type="STRING" id="398579.Spea_0034"/>
<dbReference type="KEGG" id="spl:Spea_0034"/>
<dbReference type="eggNOG" id="COG2922">
    <property type="taxonomic scope" value="Bacteria"/>
</dbReference>
<dbReference type="HOGENOM" id="CLU_133242_0_0_6"/>
<dbReference type="OrthoDB" id="9788984at2"/>
<dbReference type="Proteomes" id="UP000002608">
    <property type="component" value="Chromosome"/>
</dbReference>
<dbReference type="HAMAP" id="MF_00598">
    <property type="entry name" value="Smg"/>
    <property type="match status" value="1"/>
</dbReference>
<dbReference type="InterPro" id="IPR007456">
    <property type="entry name" value="Smg"/>
</dbReference>
<dbReference type="NCBIfam" id="NF002897">
    <property type="entry name" value="PRK03430.1"/>
    <property type="match status" value="1"/>
</dbReference>
<dbReference type="PANTHER" id="PTHR38692">
    <property type="entry name" value="PROTEIN SMG"/>
    <property type="match status" value="1"/>
</dbReference>
<dbReference type="PANTHER" id="PTHR38692:SF1">
    <property type="entry name" value="PROTEIN SMG"/>
    <property type="match status" value="1"/>
</dbReference>
<dbReference type="Pfam" id="PF04361">
    <property type="entry name" value="DUF494"/>
    <property type="match status" value="1"/>
</dbReference>
<proteinExistence type="inferred from homology"/>
<comment type="similarity">
    <text evidence="1">Belongs to the Smg family.</text>
</comment>
<name>SMG_SHEPA</name>
<gene>
    <name evidence="1" type="primary">smg</name>
    <name type="ordered locus">Spea_0034</name>
</gene>
<organism>
    <name type="scientific">Shewanella pealeana (strain ATCC 700345 / ANG-SQ1)</name>
    <dbReference type="NCBI Taxonomy" id="398579"/>
    <lineage>
        <taxon>Bacteria</taxon>
        <taxon>Pseudomonadati</taxon>
        <taxon>Pseudomonadota</taxon>
        <taxon>Gammaproteobacteria</taxon>
        <taxon>Alteromonadales</taxon>
        <taxon>Shewanellaceae</taxon>
        <taxon>Shewanella</taxon>
    </lineage>
</organism>
<sequence>MFDILMYLFENYVHSEVELLVDEDELTKELTRAGFHQSEIIKALSWLERLADLQEAGTPYLCNHDQQSFRIYTKAEMEKIDVESRGFLLFLEQIKVLSVEIREMVIDRVMEIDEPTLNLDDIKWVILMVLFNAPGHESAYEQMEDLIFEQPDGRLHS</sequence>
<accession>A8GYH6</accession>
<feature type="chain" id="PRO_1000082451" description="Protein Smg homolog">
    <location>
        <begin position="1"/>
        <end position="157"/>
    </location>
</feature>
<evidence type="ECO:0000255" key="1">
    <source>
        <dbReference type="HAMAP-Rule" id="MF_00598"/>
    </source>
</evidence>
<reference key="1">
    <citation type="submission" date="2007-10" db="EMBL/GenBank/DDBJ databases">
        <title>Complete sequence of Shewanella pealeana ATCC 700345.</title>
        <authorList>
            <consortium name="US DOE Joint Genome Institute"/>
            <person name="Copeland A."/>
            <person name="Lucas S."/>
            <person name="Lapidus A."/>
            <person name="Barry K."/>
            <person name="Glavina del Rio T."/>
            <person name="Dalin E."/>
            <person name="Tice H."/>
            <person name="Pitluck S."/>
            <person name="Chertkov O."/>
            <person name="Brettin T."/>
            <person name="Bruce D."/>
            <person name="Detter J.C."/>
            <person name="Han C."/>
            <person name="Schmutz J."/>
            <person name="Larimer F."/>
            <person name="Land M."/>
            <person name="Hauser L."/>
            <person name="Kyrpides N."/>
            <person name="Kim E."/>
            <person name="Zhao J.-S.Z."/>
            <person name="Manno D."/>
            <person name="Hawari J."/>
            <person name="Richardson P."/>
        </authorList>
    </citation>
    <scope>NUCLEOTIDE SEQUENCE [LARGE SCALE GENOMIC DNA]</scope>
    <source>
        <strain>ATCC 700345 / ANG-SQ1</strain>
    </source>
</reference>
<keyword id="KW-1185">Reference proteome</keyword>
<protein>
    <recommendedName>
        <fullName evidence="1">Protein Smg homolog</fullName>
    </recommendedName>
</protein>